<proteinExistence type="inferred from homology"/>
<name>Y116_BAUCH</name>
<reference key="1">
    <citation type="journal article" date="2006" name="PLoS Biol.">
        <title>Metabolic complementarity and genomics of the dual bacterial symbiosis of sharpshooters.</title>
        <authorList>
            <person name="Wu D."/>
            <person name="Daugherty S.C."/>
            <person name="Van Aken S.E."/>
            <person name="Pai G.H."/>
            <person name="Watkins K.L."/>
            <person name="Khouri H."/>
            <person name="Tallon L.J."/>
            <person name="Zaborsky J.M."/>
            <person name="Dunbar H.E."/>
            <person name="Tran P.L."/>
            <person name="Moran N.A."/>
            <person name="Eisen J.A."/>
        </authorList>
    </citation>
    <scope>NUCLEOTIDE SEQUENCE [LARGE SCALE GENOMIC DNA]</scope>
</reference>
<gene>
    <name type="ordered locus">BCI_0116</name>
</gene>
<accession>Q1LTX7</accession>
<evidence type="ECO:0000255" key="1">
    <source>
        <dbReference type="HAMAP-Rule" id="MF_00274"/>
    </source>
</evidence>
<organism>
    <name type="scientific">Baumannia cicadellinicola subsp. Homalodisca coagulata</name>
    <dbReference type="NCBI Taxonomy" id="374463"/>
    <lineage>
        <taxon>Bacteria</taxon>
        <taxon>Pseudomonadati</taxon>
        <taxon>Pseudomonadota</taxon>
        <taxon>Gammaproteobacteria</taxon>
        <taxon>Candidatus Palibaumannia</taxon>
    </lineage>
</organism>
<feature type="chain" id="PRO_1000059195" description="Nucleoid-associated protein BCI_0116">
    <location>
        <begin position="1"/>
        <end position="112"/>
    </location>
</feature>
<protein>
    <recommendedName>
        <fullName evidence="1">Nucleoid-associated protein BCI_0116</fullName>
    </recommendedName>
</protein>
<keyword id="KW-0963">Cytoplasm</keyword>
<keyword id="KW-0238">DNA-binding</keyword>
<keyword id="KW-1185">Reference proteome</keyword>
<dbReference type="EMBL" id="CP000238">
    <property type="protein sequence ID" value="ABF14193.1"/>
    <property type="molecule type" value="Genomic_DNA"/>
</dbReference>
<dbReference type="RefSeq" id="WP_011520320.1">
    <property type="nucleotide sequence ID" value="NC_007984.1"/>
</dbReference>
<dbReference type="SMR" id="Q1LTX7"/>
<dbReference type="STRING" id="374463.BCI_0116"/>
<dbReference type="KEGG" id="bci:BCI_0116"/>
<dbReference type="HOGENOM" id="CLU_140930_0_0_6"/>
<dbReference type="OrthoDB" id="9808738at2"/>
<dbReference type="Proteomes" id="UP000002427">
    <property type="component" value="Chromosome"/>
</dbReference>
<dbReference type="GO" id="GO:0043590">
    <property type="term" value="C:bacterial nucleoid"/>
    <property type="evidence" value="ECO:0007669"/>
    <property type="project" value="UniProtKB-UniRule"/>
</dbReference>
<dbReference type="GO" id="GO:0005829">
    <property type="term" value="C:cytosol"/>
    <property type="evidence" value="ECO:0007669"/>
    <property type="project" value="TreeGrafter"/>
</dbReference>
<dbReference type="GO" id="GO:0003677">
    <property type="term" value="F:DNA binding"/>
    <property type="evidence" value="ECO:0007669"/>
    <property type="project" value="UniProtKB-UniRule"/>
</dbReference>
<dbReference type="FunFam" id="3.30.1310.10:FF:000001">
    <property type="entry name" value="Nucleoid-associated protein YbaB"/>
    <property type="match status" value="1"/>
</dbReference>
<dbReference type="Gene3D" id="3.30.1310.10">
    <property type="entry name" value="Nucleoid-associated protein YbaB-like domain"/>
    <property type="match status" value="1"/>
</dbReference>
<dbReference type="HAMAP" id="MF_00274">
    <property type="entry name" value="DNA_YbaB_EbfC"/>
    <property type="match status" value="1"/>
</dbReference>
<dbReference type="InterPro" id="IPR036894">
    <property type="entry name" value="YbaB-like_sf"/>
</dbReference>
<dbReference type="InterPro" id="IPR004401">
    <property type="entry name" value="YbaB/EbfC"/>
</dbReference>
<dbReference type="NCBIfam" id="TIGR00103">
    <property type="entry name" value="DNA_YbaB_EbfC"/>
    <property type="match status" value="1"/>
</dbReference>
<dbReference type="PANTHER" id="PTHR33449">
    <property type="entry name" value="NUCLEOID-ASSOCIATED PROTEIN YBAB"/>
    <property type="match status" value="1"/>
</dbReference>
<dbReference type="PANTHER" id="PTHR33449:SF1">
    <property type="entry name" value="NUCLEOID-ASSOCIATED PROTEIN YBAB"/>
    <property type="match status" value="1"/>
</dbReference>
<dbReference type="Pfam" id="PF02575">
    <property type="entry name" value="YbaB_DNA_bd"/>
    <property type="match status" value="1"/>
</dbReference>
<dbReference type="PIRSF" id="PIRSF004555">
    <property type="entry name" value="UCP004555"/>
    <property type="match status" value="1"/>
</dbReference>
<dbReference type="SUPFAM" id="SSF82607">
    <property type="entry name" value="YbaB-like"/>
    <property type="match status" value="1"/>
</dbReference>
<comment type="function">
    <text evidence="1">Binds to DNA and alters its conformation. May be involved in regulation of gene expression, nucleoid organization and DNA protection.</text>
</comment>
<comment type="subunit">
    <text evidence="1">Homodimer.</text>
</comment>
<comment type="subcellular location">
    <subcellularLocation>
        <location evidence="1">Cytoplasm</location>
        <location evidence="1">Nucleoid</location>
    </subcellularLocation>
</comment>
<comment type="similarity">
    <text evidence="1">Belongs to the YbaB/EbfC family.</text>
</comment>
<sequence>MFSKSGMSDLMKHAQRMQEQMQQMQGEIAKLEVNGESGAGLVKVTINGVYHCRRVEIDSSLLQDDKDMLEDLITAAFNDAVRRITEIKKDKMTSLSSSLQMPLGFNWNMPFL</sequence>